<organism>
    <name type="scientific">Salmonella paratyphi A (strain AKU_12601)</name>
    <dbReference type="NCBI Taxonomy" id="554290"/>
    <lineage>
        <taxon>Bacteria</taxon>
        <taxon>Pseudomonadati</taxon>
        <taxon>Pseudomonadota</taxon>
        <taxon>Gammaproteobacteria</taxon>
        <taxon>Enterobacterales</taxon>
        <taxon>Enterobacteriaceae</taxon>
        <taxon>Salmonella</taxon>
    </lineage>
</organism>
<dbReference type="EC" id="4.1.1.11" evidence="1"/>
<dbReference type="EMBL" id="FM200053">
    <property type="protein sequence ID" value="CAR58293.1"/>
    <property type="molecule type" value="Genomic_DNA"/>
</dbReference>
<dbReference type="RefSeq" id="WP_000621526.1">
    <property type="nucleotide sequence ID" value="NC_011147.1"/>
</dbReference>
<dbReference type="SMR" id="B5BL63"/>
<dbReference type="GeneID" id="89550440"/>
<dbReference type="KEGG" id="sek:SSPA0182"/>
<dbReference type="HOGENOM" id="CLU_115305_2_1_6"/>
<dbReference type="UniPathway" id="UPA00028">
    <property type="reaction ID" value="UER00002"/>
</dbReference>
<dbReference type="Proteomes" id="UP000001869">
    <property type="component" value="Chromosome"/>
</dbReference>
<dbReference type="GO" id="GO:0005829">
    <property type="term" value="C:cytosol"/>
    <property type="evidence" value="ECO:0007669"/>
    <property type="project" value="TreeGrafter"/>
</dbReference>
<dbReference type="GO" id="GO:0004068">
    <property type="term" value="F:aspartate 1-decarboxylase activity"/>
    <property type="evidence" value="ECO:0007669"/>
    <property type="project" value="UniProtKB-UniRule"/>
</dbReference>
<dbReference type="GO" id="GO:0006523">
    <property type="term" value="P:alanine biosynthetic process"/>
    <property type="evidence" value="ECO:0007669"/>
    <property type="project" value="InterPro"/>
</dbReference>
<dbReference type="GO" id="GO:0015940">
    <property type="term" value="P:pantothenate biosynthetic process"/>
    <property type="evidence" value="ECO:0007669"/>
    <property type="project" value="UniProtKB-UniRule"/>
</dbReference>
<dbReference type="CDD" id="cd06919">
    <property type="entry name" value="Asp_decarbox"/>
    <property type="match status" value="1"/>
</dbReference>
<dbReference type="FunFam" id="2.40.40.20:FF:000004">
    <property type="entry name" value="Aspartate 1-decarboxylase"/>
    <property type="match status" value="1"/>
</dbReference>
<dbReference type="Gene3D" id="2.40.40.20">
    <property type="match status" value="1"/>
</dbReference>
<dbReference type="HAMAP" id="MF_00446">
    <property type="entry name" value="PanD"/>
    <property type="match status" value="1"/>
</dbReference>
<dbReference type="InterPro" id="IPR009010">
    <property type="entry name" value="Asp_de-COase-like_dom_sf"/>
</dbReference>
<dbReference type="InterPro" id="IPR003190">
    <property type="entry name" value="Asp_decarbox"/>
</dbReference>
<dbReference type="NCBIfam" id="TIGR00223">
    <property type="entry name" value="panD"/>
    <property type="match status" value="1"/>
</dbReference>
<dbReference type="PANTHER" id="PTHR21012">
    <property type="entry name" value="ASPARTATE 1-DECARBOXYLASE"/>
    <property type="match status" value="1"/>
</dbReference>
<dbReference type="PANTHER" id="PTHR21012:SF0">
    <property type="entry name" value="ASPARTATE 1-DECARBOXYLASE"/>
    <property type="match status" value="1"/>
</dbReference>
<dbReference type="Pfam" id="PF02261">
    <property type="entry name" value="Asp_decarbox"/>
    <property type="match status" value="1"/>
</dbReference>
<dbReference type="PIRSF" id="PIRSF006246">
    <property type="entry name" value="Asp_decarbox"/>
    <property type="match status" value="1"/>
</dbReference>
<dbReference type="SUPFAM" id="SSF50692">
    <property type="entry name" value="ADC-like"/>
    <property type="match status" value="1"/>
</dbReference>
<protein>
    <recommendedName>
        <fullName evidence="1">Aspartate 1-decarboxylase</fullName>
        <ecNumber evidence="1">4.1.1.11</ecNumber>
    </recommendedName>
    <alternativeName>
        <fullName evidence="1">Aspartate alpha-decarboxylase</fullName>
    </alternativeName>
    <component>
        <recommendedName>
            <fullName evidence="1">Aspartate 1-decarboxylase beta chain</fullName>
        </recommendedName>
    </component>
    <component>
        <recommendedName>
            <fullName evidence="1">Aspartate 1-decarboxylase alpha chain</fullName>
        </recommendedName>
    </component>
</protein>
<evidence type="ECO:0000255" key="1">
    <source>
        <dbReference type="HAMAP-Rule" id="MF_00446"/>
    </source>
</evidence>
<accession>B5BL63</accession>
<gene>
    <name evidence="1" type="primary">panD</name>
    <name type="ordered locus">SSPA0182</name>
</gene>
<sequence length="126" mass="13887">MIRTMLQGKLHRVKVTQADLHYEGSCAIDQDFLDASGILENEAIDIWNVTNGKRFSTYAIAAERGSRIISVNGAAAHCAEVGDIVIIASFVTMSDEEARTWRPKVAYFEGDNEMKRTAKAIPVQVA</sequence>
<feature type="chain" id="PRO_1000192035" description="Aspartate 1-decarboxylase beta chain" evidence="1">
    <location>
        <begin position="1"/>
        <end position="24"/>
    </location>
</feature>
<feature type="chain" id="PRO_1000192036" description="Aspartate 1-decarboxylase alpha chain" evidence="1">
    <location>
        <begin position="25"/>
        <end position="126"/>
    </location>
</feature>
<feature type="active site" description="Schiff-base intermediate with substrate; via pyruvic acid" evidence="1">
    <location>
        <position position="25"/>
    </location>
</feature>
<feature type="active site" description="Proton donor" evidence="1">
    <location>
        <position position="58"/>
    </location>
</feature>
<feature type="binding site" evidence="1">
    <location>
        <position position="57"/>
    </location>
    <ligand>
        <name>substrate</name>
    </ligand>
</feature>
<feature type="binding site" evidence="1">
    <location>
        <begin position="73"/>
        <end position="75"/>
    </location>
    <ligand>
        <name>substrate</name>
    </ligand>
</feature>
<feature type="modified residue" description="Pyruvic acid (Ser)" evidence="1">
    <location>
        <position position="25"/>
    </location>
</feature>
<comment type="function">
    <text evidence="1">Catalyzes the pyruvoyl-dependent decarboxylation of aspartate to produce beta-alanine.</text>
</comment>
<comment type="catalytic activity">
    <reaction evidence="1">
        <text>L-aspartate + H(+) = beta-alanine + CO2</text>
        <dbReference type="Rhea" id="RHEA:19497"/>
        <dbReference type="ChEBI" id="CHEBI:15378"/>
        <dbReference type="ChEBI" id="CHEBI:16526"/>
        <dbReference type="ChEBI" id="CHEBI:29991"/>
        <dbReference type="ChEBI" id="CHEBI:57966"/>
        <dbReference type="EC" id="4.1.1.11"/>
    </reaction>
</comment>
<comment type="cofactor">
    <cofactor evidence="1">
        <name>pyruvate</name>
        <dbReference type="ChEBI" id="CHEBI:15361"/>
    </cofactor>
    <text evidence="1">Binds 1 pyruvoyl group covalently per subunit.</text>
</comment>
<comment type="pathway">
    <text evidence="1">Cofactor biosynthesis; (R)-pantothenate biosynthesis; beta-alanine from L-aspartate: step 1/1.</text>
</comment>
<comment type="subunit">
    <text evidence="1">Heterooctamer of four alpha and four beta subunits.</text>
</comment>
<comment type="subcellular location">
    <subcellularLocation>
        <location evidence="1">Cytoplasm</location>
    </subcellularLocation>
</comment>
<comment type="PTM">
    <text evidence="1">Is synthesized initially as an inactive proenzyme, which is activated by self-cleavage at a specific serine bond to produce a beta-subunit with a hydroxyl group at its C-terminus and an alpha-subunit with a pyruvoyl group at its N-terminus.</text>
</comment>
<comment type="similarity">
    <text evidence="1">Belongs to the PanD family.</text>
</comment>
<name>PAND_SALPK</name>
<proteinExistence type="inferred from homology"/>
<keyword id="KW-0068">Autocatalytic cleavage</keyword>
<keyword id="KW-0963">Cytoplasm</keyword>
<keyword id="KW-0210">Decarboxylase</keyword>
<keyword id="KW-0456">Lyase</keyword>
<keyword id="KW-0566">Pantothenate biosynthesis</keyword>
<keyword id="KW-0670">Pyruvate</keyword>
<keyword id="KW-0704">Schiff base</keyword>
<keyword id="KW-0865">Zymogen</keyword>
<reference key="1">
    <citation type="journal article" date="2009" name="BMC Genomics">
        <title>Pseudogene accumulation in the evolutionary histories of Salmonella enterica serovars Paratyphi A and Typhi.</title>
        <authorList>
            <person name="Holt K.E."/>
            <person name="Thomson N.R."/>
            <person name="Wain J."/>
            <person name="Langridge G.C."/>
            <person name="Hasan R."/>
            <person name="Bhutta Z.A."/>
            <person name="Quail M.A."/>
            <person name="Norbertczak H."/>
            <person name="Walker D."/>
            <person name="Simmonds M."/>
            <person name="White B."/>
            <person name="Bason N."/>
            <person name="Mungall K."/>
            <person name="Dougan G."/>
            <person name="Parkhill J."/>
        </authorList>
    </citation>
    <scope>NUCLEOTIDE SEQUENCE [LARGE SCALE GENOMIC DNA]</scope>
    <source>
        <strain>AKU_12601</strain>
    </source>
</reference>